<feature type="chain" id="PRO_0000181919" description="Ribosome maturation factor RimP">
    <location>
        <begin position="1"/>
        <end position="155"/>
    </location>
</feature>
<comment type="function">
    <text evidence="1">Required for maturation of 30S ribosomal subunits.</text>
</comment>
<comment type="subcellular location">
    <subcellularLocation>
        <location evidence="1">Cytoplasm</location>
    </subcellularLocation>
</comment>
<comment type="similarity">
    <text evidence="1">Belongs to the RimP family.</text>
</comment>
<keyword id="KW-0963">Cytoplasm</keyword>
<keyword id="KW-0690">Ribosome biogenesis</keyword>
<gene>
    <name evidence="1" type="primary">rimP</name>
    <name type="ordered locus">SACOL1284</name>
</gene>
<protein>
    <recommendedName>
        <fullName evidence="1">Ribosome maturation factor RimP</fullName>
    </recommendedName>
</protein>
<evidence type="ECO:0000255" key="1">
    <source>
        <dbReference type="HAMAP-Rule" id="MF_01077"/>
    </source>
</evidence>
<organism>
    <name type="scientific">Staphylococcus aureus (strain COL)</name>
    <dbReference type="NCBI Taxonomy" id="93062"/>
    <lineage>
        <taxon>Bacteria</taxon>
        <taxon>Bacillati</taxon>
        <taxon>Bacillota</taxon>
        <taxon>Bacilli</taxon>
        <taxon>Bacillales</taxon>
        <taxon>Staphylococcaceae</taxon>
        <taxon>Staphylococcus</taxon>
    </lineage>
</organism>
<sequence>MSKITEQVEVIVKPIMEDLNFELVDVEYVKEGRDHFLRISIDKEGGVDLNDCTLASEKISEAMDANDPIPEMYYLDVASPGAERPIKKEQDFQNAITKPVFVSLYVPIEGEKEWLGILQEVNNETIVVQVKIKARTKDIEIPRDKIAKARHAVMI</sequence>
<proteinExistence type="inferred from homology"/>
<dbReference type="EMBL" id="CP000046">
    <property type="protein sequence ID" value="AAW38115.1"/>
    <property type="molecule type" value="Genomic_DNA"/>
</dbReference>
<dbReference type="RefSeq" id="WP_000036631.1">
    <property type="nucleotide sequence ID" value="NZ_JBGOFO010000002.1"/>
</dbReference>
<dbReference type="SASBDB" id="Q5HGG6"/>
<dbReference type="SMR" id="Q5HGG6"/>
<dbReference type="KEGG" id="sac:SACOL1284"/>
<dbReference type="HOGENOM" id="CLU_070525_2_0_9"/>
<dbReference type="Proteomes" id="UP000000530">
    <property type="component" value="Chromosome"/>
</dbReference>
<dbReference type="GO" id="GO:0005829">
    <property type="term" value="C:cytosol"/>
    <property type="evidence" value="ECO:0007669"/>
    <property type="project" value="TreeGrafter"/>
</dbReference>
<dbReference type="GO" id="GO:0000028">
    <property type="term" value="P:ribosomal small subunit assembly"/>
    <property type="evidence" value="ECO:0007669"/>
    <property type="project" value="TreeGrafter"/>
</dbReference>
<dbReference type="GO" id="GO:0006412">
    <property type="term" value="P:translation"/>
    <property type="evidence" value="ECO:0007669"/>
    <property type="project" value="TreeGrafter"/>
</dbReference>
<dbReference type="CDD" id="cd01734">
    <property type="entry name" value="YlxS_C"/>
    <property type="match status" value="1"/>
</dbReference>
<dbReference type="FunFam" id="3.30.300.70:FF:000001">
    <property type="entry name" value="Ribosome maturation factor RimP"/>
    <property type="match status" value="1"/>
</dbReference>
<dbReference type="Gene3D" id="2.30.30.180">
    <property type="entry name" value="Ribosome maturation factor RimP, C-terminal domain"/>
    <property type="match status" value="1"/>
</dbReference>
<dbReference type="Gene3D" id="3.30.300.70">
    <property type="entry name" value="RimP-like superfamily, N-terminal"/>
    <property type="match status" value="1"/>
</dbReference>
<dbReference type="HAMAP" id="MF_01077">
    <property type="entry name" value="RimP"/>
    <property type="match status" value="1"/>
</dbReference>
<dbReference type="InterPro" id="IPR003728">
    <property type="entry name" value="Ribosome_maturation_RimP"/>
</dbReference>
<dbReference type="InterPro" id="IPR028998">
    <property type="entry name" value="RimP_C"/>
</dbReference>
<dbReference type="InterPro" id="IPR036847">
    <property type="entry name" value="RimP_C_sf"/>
</dbReference>
<dbReference type="InterPro" id="IPR028989">
    <property type="entry name" value="RimP_N"/>
</dbReference>
<dbReference type="InterPro" id="IPR035956">
    <property type="entry name" value="RimP_N_sf"/>
</dbReference>
<dbReference type="NCBIfam" id="NF000928">
    <property type="entry name" value="PRK00092.1-2"/>
    <property type="match status" value="1"/>
</dbReference>
<dbReference type="PANTHER" id="PTHR33867">
    <property type="entry name" value="RIBOSOME MATURATION FACTOR RIMP"/>
    <property type="match status" value="1"/>
</dbReference>
<dbReference type="PANTHER" id="PTHR33867:SF1">
    <property type="entry name" value="RIBOSOME MATURATION FACTOR RIMP"/>
    <property type="match status" value="1"/>
</dbReference>
<dbReference type="Pfam" id="PF17384">
    <property type="entry name" value="DUF150_C"/>
    <property type="match status" value="1"/>
</dbReference>
<dbReference type="Pfam" id="PF02576">
    <property type="entry name" value="RimP_N"/>
    <property type="match status" value="1"/>
</dbReference>
<dbReference type="SUPFAM" id="SSF74942">
    <property type="entry name" value="YhbC-like, C-terminal domain"/>
    <property type="match status" value="1"/>
</dbReference>
<dbReference type="SUPFAM" id="SSF75420">
    <property type="entry name" value="YhbC-like, N-terminal domain"/>
    <property type="match status" value="1"/>
</dbReference>
<reference key="1">
    <citation type="journal article" date="2005" name="J. Bacteriol.">
        <title>Insights on evolution of virulence and resistance from the complete genome analysis of an early methicillin-resistant Staphylococcus aureus strain and a biofilm-producing methicillin-resistant Staphylococcus epidermidis strain.</title>
        <authorList>
            <person name="Gill S.R."/>
            <person name="Fouts D.E."/>
            <person name="Archer G.L."/>
            <person name="Mongodin E.F."/>
            <person name="DeBoy R.T."/>
            <person name="Ravel J."/>
            <person name="Paulsen I.T."/>
            <person name="Kolonay J.F."/>
            <person name="Brinkac L.M."/>
            <person name="Beanan M.J."/>
            <person name="Dodson R.J."/>
            <person name="Daugherty S.C."/>
            <person name="Madupu R."/>
            <person name="Angiuoli S.V."/>
            <person name="Durkin A.S."/>
            <person name="Haft D.H."/>
            <person name="Vamathevan J.J."/>
            <person name="Khouri H."/>
            <person name="Utterback T.R."/>
            <person name="Lee C."/>
            <person name="Dimitrov G."/>
            <person name="Jiang L."/>
            <person name="Qin H."/>
            <person name="Weidman J."/>
            <person name="Tran K."/>
            <person name="Kang K.H."/>
            <person name="Hance I.R."/>
            <person name="Nelson K.E."/>
            <person name="Fraser C.M."/>
        </authorList>
    </citation>
    <scope>NUCLEOTIDE SEQUENCE [LARGE SCALE GENOMIC DNA]</scope>
    <source>
        <strain>COL</strain>
    </source>
</reference>
<name>RIMP_STAAC</name>
<accession>Q5HGG6</accession>